<organism>
    <name type="scientific">Mycobacterium tuberculosis (strain ATCC 25618 / H37Rv)</name>
    <dbReference type="NCBI Taxonomy" id="83332"/>
    <lineage>
        <taxon>Bacteria</taxon>
        <taxon>Bacillati</taxon>
        <taxon>Actinomycetota</taxon>
        <taxon>Actinomycetes</taxon>
        <taxon>Mycobacteriales</taxon>
        <taxon>Mycobacteriaceae</taxon>
        <taxon>Mycobacterium</taxon>
        <taxon>Mycobacterium tuberculosis complex</taxon>
    </lineage>
</organism>
<name>RL1_MYCTU</name>
<keyword id="KW-0002">3D-structure</keyword>
<keyword id="KW-1185">Reference proteome</keyword>
<keyword id="KW-0678">Repressor</keyword>
<keyword id="KW-0687">Ribonucleoprotein</keyword>
<keyword id="KW-0689">Ribosomal protein</keyword>
<keyword id="KW-0694">RNA-binding</keyword>
<keyword id="KW-0699">rRNA-binding</keyword>
<keyword id="KW-0810">Translation regulation</keyword>
<keyword id="KW-0820">tRNA-binding</keyword>
<sequence length="235" mass="24756">MSKTSKAYRAAAAKVDRTNLYTPLQAAKLAKETSSTKQDATVEVAIRLGVDPRKADQMVRGTVNLPHGTGKTARVAVFAVGEKADAAVAAGADVVGSDDLIERIQGGWLEFDAAIATPDQMAKVGRIARVLGPRGLMPNPKTGTVTADVAKAVADIKGGKINFRVDKQANLHFVIGKASFDEKLLAENYGAAIDEVLRLKPSSSKGRYLKKITVSTTTGPGIPVDPSITRNFAGE</sequence>
<reference key="1">
    <citation type="journal article" date="1998" name="Nature">
        <title>Deciphering the biology of Mycobacterium tuberculosis from the complete genome sequence.</title>
        <authorList>
            <person name="Cole S.T."/>
            <person name="Brosch R."/>
            <person name="Parkhill J."/>
            <person name="Garnier T."/>
            <person name="Churcher C.M."/>
            <person name="Harris D.E."/>
            <person name="Gordon S.V."/>
            <person name="Eiglmeier K."/>
            <person name="Gas S."/>
            <person name="Barry C.E. III"/>
            <person name="Tekaia F."/>
            <person name="Badcock K."/>
            <person name="Basham D."/>
            <person name="Brown D."/>
            <person name="Chillingworth T."/>
            <person name="Connor R."/>
            <person name="Davies R.M."/>
            <person name="Devlin K."/>
            <person name="Feltwell T."/>
            <person name="Gentles S."/>
            <person name="Hamlin N."/>
            <person name="Holroyd S."/>
            <person name="Hornsby T."/>
            <person name="Jagels K."/>
            <person name="Krogh A."/>
            <person name="McLean J."/>
            <person name="Moule S."/>
            <person name="Murphy L.D."/>
            <person name="Oliver S."/>
            <person name="Osborne J."/>
            <person name="Quail M.A."/>
            <person name="Rajandream M.A."/>
            <person name="Rogers J."/>
            <person name="Rutter S."/>
            <person name="Seeger K."/>
            <person name="Skelton S."/>
            <person name="Squares S."/>
            <person name="Squares R."/>
            <person name="Sulston J.E."/>
            <person name="Taylor K."/>
            <person name="Whitehead S."/>
            <person name="Barrell B.G."/>
        </authorList>
    </citation>
    <scope>NUCLEOTIDE SEQUENCE [LARGE SCALE GENOMIC DNA]</scope>
    <source>
        <strain>ATCC 25618 / H37Rv</strain>
    </source>
</reference>
<reference key="2">
    <citation type="journal article" date="2011" name="Mol. Cell. Proteomics">
        <title>Proteogenomic analysis of Mycobacterium tuberculosis by high resolution mass spectrometry.</title>
        <authorList>
            <person name="Kelkar D.S."/>
            <person name="Kumar D."/>
            <person name="Kumar P."/>
            <person name="Balakrishnan L."/>
            <person name="Muthusamy B."/>
            <person name="Yadav A.K."/>
            <person name="Shrivastava P."/>
            <person name="Marimuthu A."/>
            <person name="Anand S."/>
            <person name="Sundaram H."/>
            <person name="Kingsbury R."/>
            <person name="Harsha H.C."/>
            <person name="Nair B."/>
            <person name="Prasad T.S."/>
            <person name="Chauhan D.S."/>
            <person name="Katoch K."/>
            <person name="Katoch V.M."/>
            <person name="Kumar P."/>
            <person name="Chaerkady R."/>
            <person name="Ramachandran S."/>
            <person name="Dash D."/>
            <person name="Pandey A."/>
        </authorList>
    </citation>
    <scope>IDENTIFICATION BY MASS SPECTROMETRY [LARGE SCALE ANALYSIS]</scope>
    <source>
        <strain>ATCC 25618 / H37Rv</strain>
    </source>
</reference>
<gene>
    <name evidence="1" type="primary">rplA</name>
    <name type="ordered locus">Rv0641</name>
    <name type="ORF">MTCY20H10.22</name>
</gene>
<comment type="function">
    <text evidence="1">Binds directly to 23S rRNA. The L1 stalk is quite mobile in the ribosome, and is involved in E site tRNA release.</text>
</comment>
<comment type="function">
    <text evidence="1">Protein L1 is also a translational repressor protein, it controls the translation of the L11 operon by binding to its mRNA.</text>
</comment>
<comment type="subunit">
    <text evidence="1">Part of the 50S ribosomal subunit.</text>
</comment>
<comment type="similarity">
    <text evidence="1">Belongs to the universal ribosomal protein uL1 family.</text>
</comment>
<evidence type="ECO:0000255" key="1">
    <source>
        <dbReference type="HAMAP-Rule" id="MF_01318"/>
    </source>
</evidence>
<evidence type="ECO:0000305" key="2"/>
<dbReference type="EMBL" id="AL123456">
    <property type="protein sequence ID" value="CCP43384.1"/>
    <property type="molecule type" value="Genomic_DNA"/>
</dbReference>
<dbReference type="PIR" id="F70613">
    <property type="entry name" value="F70613"/>
</dbReference>
<dbReference type="RefSeq" id="NP_215155.1">
    <property type="nucleotide sequence ID" value="NC_000962.3"/>
</dbReference>
<dbReference type="RefSeq" id="WP_003403292.1">
    <property type="nucleotide sequence ID" value="NZ_NVQJ01000007.1"/>
</dbReference>
<dbReference type="PDB" id="7MSC">
    <property type="method" value="EM"/>
    <property type="resolution" value="2.97 A"/>
    <property type="chains" value="8=1-235"/>
</dbReference>
<dbReference type="PDB" id="7MSH">
    <property type="method" value="EM"/>
    <property type="resolution" value="3.23 A"/>
    <property type="chains" value="8=1-235"/>
</dbReference>
<dbReference type="PDB" id="7MSM">
    <property type="method" value="EM"/>
    <property type="resolution" value="2.79 A"/>
    <property type="chains" value="8=1-235"/>
</dbReference>
<dbReference type="PDB" id="7MSZ">
    <property type="method" value="EM"/>
    <property type="resolution" value="3.10 A"/>
    <property type="chains" value="8=1-235"/>
</dbReference>
<dbReference type="PDB" id="7MT2">
    <property type="method" value="EM"/>
    <property type="resolution" value="2.76 A"/>
    <property type="chains" value="8=1-235"/>
</dbReference>
<dbReference type="PDB" id="7MT3">
    <property type="method" value="EM"/>
    <property type="resolution" value="2.80 A"/>
    <property type="chains" value="8=1-235"/>
</dbReference>
<dbReference type="PDB" id="7MT7">
    <property type="method" value="EM"/>
    <property type="resolution" value="2.71 A"/>
    <property type="chains" value="8=1-235"/>
</dbReference>
<dbReference type="PDBsum" id="7MSC"/>
<dbReference type="PDBsum" id="7MSH"/>
<dbReference type="PDBsum" id="7MSM"/>
<dbReference type="PDBsum" id="7MSZ"/>
<dbReference type="PDBsum" id="7MT2"/>
<dbReference type="PDBsum" id="7MT3"/>
<dbReference type="PDBsum" id="7MT7"/>
<dbReference type="EMDB" id="EMD-23961"/>
<dbReference type="EMDB" id="EMD-23962"/>
<dbReference type="EMDB" id="EMD-23969"/>
<dbReference type="EMDB" id="EMD-23972"/>
<dbReference type="EMDB" id="EMD-23974"/>
<dbReference type="EMDB" id="EMD-23975"/>
<dbReference type="EMDB" id="EMD-23976"/>
<dbReference type="SMR" id="P9WHC7"/>
<dbReference type="FunCoup" id="P9WHC7">
    <property type="interactions" value="375"/>
</dbReference>
<dbReference type="STRING" id="83332.Rv0641"/>
<dbReference type="PaxDb" id="83332-Rv0641"/>
<dbReference type="DNASU" id="888043"/>
<dbReference type="GeneID" id="45424601"/>
<dbReference type="GeneID" id="888043"/>
<dbReference type="KEGG" id="mtu:Rv0641"/>
<dbReference type="KEGG" id="mtv:RVBD_0641"/>
<dbReference type="TubercuList" id="Rv0641"/>
<dbReference type="eggNOG" id="COG0081">
    <property type="taxonomic scope" value="Bacteria"/>
</dbReference>
<dbReference type="InParanoid" id="P9WHC7"/>
<dbReference type="OrthoDB" id="9803740at2"/>
<dbReference type="PhylomeDB" id="P9WHC7"/>
<dbReference type="PRO" id="PR:P9WHC7"/>
<dbReference type="Proteomes" id="UP000001584">
    <property type="component" value="Chromosome"/>
</dbReference>
<dbReference type="GO" id="GO:0005829">
    <property type="term" value="C:cytosol"/>
    <property type="evidence" value="ECO:0007005"/>
    <property type="project" value="MTBBASE"/>
</dbReference>
<dbReference type="GO" id="GO:0015934">
    <property type="term" value="C:large ribosomal subunit"/>
    <property type="evidence" value="ECO:0007669"/>
    <property type="project" value="InterPro"/>
</dbReference>
<dbReference type="GO" id="GO:0009274">
    <property type="term" value="C:peptidoglycan-based cell wall"/>
    <property type="evidence" value="ECO:0007005"/>
    <property type="project" value="MTBBASE"/>
</dbReference>
<dbReference type="GO" id="GO:0005886">
    <property type="term" value="C:plasma membrane"/>
    <property type="evidence" value="ECO:0007005"/>
    <property type="project" value="MTBBASE"/>
</dbReference>
<dbReference type="GO" id="GO:0019843">
    <property type="term" value="F:rRNA binding"/>
    <property type="evidence" value="ECO:0007669"/>
    <property type="project" value="UniProtKB-UniRule"/>
</dbReference>
<dbReference type="GO" id="GO:0003735">
    <property type="term" value="F:structural constituent of ribosome"/>
    <property type="evidence" value="ECO:0007669"/>
    <property type="project" value="InterPro"/>
</dbReference>
<dbReference type="GO" id="GO:0000049">
    <property type="term" value="F:tRNA binding"/>
    <property type="evidence" value="ECO:0007669"/>
    <property type="project" value="UniProtKB-KW"/>
</dbReference>
<dbReference type="GO" id="GO:0006417">
    <property type="term" value="P:regulation of translation"/>
    <property type="evidence" value="ECO:0007669"/>
    <property type="project" value="UniProtKB-KW"/>
</dbReference>
<dbReference type="GO" id="GO:0006412">
    <property type="term" value="P:translation"/>
    <property type="evidence" value="ECO:0007669"/>
    <property type="project" value="UniProtKB-UniRule"/>
</dbReference>
<dbReference type="CDD" id="cd00403">
    <property type="entry name" value="Ribosomal_L1"/>
    <property type="match status" value="1"/>
</dbReference>
<dbReference type="FunFam" id="3.40.50.790:FF:000001">
    <property type="entry name" value="50S ribosomal protein L1"/>
    <property type="match status" value="1"/>
</dbReference>
<dbReference type="Gene3D" id="3.30.190.20">
    <property type="match status" value="1"/>
</dbReference>
<dbReference type="Gene3D" id="3.40.50.790">
    <property type="match status" value="1"/>
</dbReference>
<dbReference type="HAMAP" id="MF_01318_B">
    <property type="entry name" value="Ribosomal_uL1_B"/>
    <property type="match status" value="1"/>
</dbReference>
<dbReference type="InterPro" id="IPR005878">
    <property type="entry name" value="Ribosom_uL1_bac-type"/>
</dbReference>
<dbReference type="InterPro" id="IPR002143">
    <property type="entry name" value="Ribosomal_uL1"/>
</dbReference>
<dbReference type="InterPro" id="IPR023674">
    <property type="entry name" value="Ribosomal_uL1-like"/>
</dbReference>
<dbReference type="InterPro" id="IPR028364">
    <property type="entry name" value="Ribosomal_uL1/biogenesis"/>
</dbReference>
<dbReference type="InterPro" id="IPR016095">
    <property type="entry name" value="Ribosomal_uL1_3-a/b-sand"/>
</dbReference>
<dbReference type="InterPro" id="IPR023673">
    <property type="entry name" value="Ribosomal_uL1_CS"/>
</dbReference>
<dbReference type="NCBIfam" id="TIGR01169">
    <property type="entry name" value="rplA_bact"/>
    <property type="match status" value="1"/>
</dbReference>
<dbReference type="PANTHER" id="PTHR36427">
    <property type="entry name" value="54S RIBOSOMAL PROTEIN L1, MITOCHONDRIAL"/>
    <property type="match status" value="1"/>
</dbReference>
<dbReference type="PANTHER" id="PTHR36427:SF3">
    <property type="entry name" value="LARGE RIBOSOMAL SUBUNIT PROTEIN UL1M"/>
    <property type="match status" value="1"/>
</dbReference>
<dbReference type="Pfam" id="PF00687">
    <property type="entry name" value="Ribosomal_L1"/>
    <property type="match status" value="1"/>
</dbReference>
<dbReference type="PIRSF" id="PIRSF002155">
    <property type="entry name" value="Ribosomal_L1"/>
    <property type="match status" value="1"/>
</dbReference>
<dbReference type="SUPFAM" id="SSF56808">
    <property type="entry name" value="Ribosomal protein L1"/>
    <property type="match status" value="1"/>
</dbReference>
<dbReference type="PROSITE" id="PS01199">
    <property type="entry name" value="RIBOSOMAL_L1"/>
    <property type="match status" value="1"/>
</dbReference>
<protein>
    <recommendedName>
        <fullName evidence="1">Large ribosomal subunit protein uL1</fullName>
    </recommendedName>
    <alternativeName>
        <fullName evidence="2">50S ribosomal protein L1</fullName>
    </alternativeName>
</protein>
<accession>P9WHC7</accession>
<accession>L0T625</accession>
<accession>P96932</accession>
<proteinExistence type="evidence at protein level"/>
<feature type="chain" id="PRO_0000125697" description="Large ribosomal subunit protein uL1">
    <location>
        <begin position="1"/>
        <end position="235"/>
    </location>
</feature>